<proteinExistence type="inferred from homology"/>
<feature type="chain" id="PRO_0000395333" description="Small ribosomal subunit protein uS5m">
    <location>
        <begin position="1"/>
        <end position="415"/>
    </location>
</feature>
<feature type="domain" description="S5 DRBM" evidence="3">
    <location>
        <begin position="131"/>
        <end position="197"/>
    </location>
</feature>
<feature type="region of interest" description="Disordered" evidence="4">
    <location>
        <begin position="1"/>
        <end position="31"/>
    </location>
</feature>
<feature type="region of interest" description="Disordered" evidence="4">
    <location>
        <begin position="396"/>
        <end position="415"/>
    </location>
</feature>
<evidence type="ECO:0000250" key="1">
    <source>
        <dbReference type="UniProtKB" id="P82675"/>
    </source>
</evidence>
<evidence type="ECO:0000255" key="2"/>
<evidence type="ECO:0000255" key="3">
    <source>
        <dbReference type="PROSITE-ProRule" id="PRU00268"/>
    </source>
</evidence>
<evidence type="ECO:0000256" key="4">
    <source>
        <dbReference type="SAM" id="MobiDB-lite"/>
    </source>
</evidence>
<evidence type="ECO:0000305" key="5"/>
<reference key="1">
    <citation type="journal article" date="2003" name="PLoS Biol.">
        <title>The genome sequence of Caenorhabditis briggsae: a platform for comparative genomics.</title>
        <authorList>
            <person name="Stein L.D."/>
            <person name="Bao Z."/>
            <person name="Blasiar D."/>
            <person name="Blumenthal T."/>
            <person name="Brent M.R."/>
            <person name="Chen N."/>
            <person name="Chinwalla A."/>
            <person name="Clarke L."/>
            <person name="Clee C."/>
            <person name="Coghlan A."/>
            <person name="Coulson A."/>
            <person name="D'Eustachio P."/>
            <person name="Fitch D.H.A."/>
            <person name="Fulton L.A."/>
            <person name="Fulton R.E."/>
            <person name="Griffiths-Jones S."/>
            <person name="Harris T.W."/>
            <person name="Hillier L.W."/>
            <person name="Kamath R."/>
            <person name="Kuwabara P.E."/>
            <person name="Mardis E.R."/>
            <person name="Marra M.A."/>
            <person name="Miner T.L."/>
            <person name="Minx P."/>
            <person name="Mullikin J.C."/>
            <person name="Plumb R.W."/>
            <person name="Rogers J."/>
            <person name="Schein J.E."/>
            <person name="Sohrmann M."/>
            <person name="Spieth J."/>
            <person name="Stajich J.E."/>
            <person name="Wei C."/>
            <person name="Willey D."/>
            <person name="Wilson R.K."/>
            <person name="Durbin R.M."/>
            <person name="Waterston R.H."/>
        </authorList>
    </citation>
    <scope>NUCLEOTIDE SEQUENCE [LARGE SCALE GENOMIC DNA]</scope>
    <source>
        <strain>AF16</strain>
    </source>
</reference>
<sequence length="415" mass="47075">MRRSGPELWKTLTSVSKSGQKKGRRNTRQPVRPLSRFYRIGSSPMKVEFAGLNAPMRLNDESLMTIAEQTEDEIRDLMGGTKKILEERDTGKKKRNREKLHPMERGFSGTQLVGQKLGAPPPVDGVNFDDFETYCLEVKRTSNMTNVFGRVHTMSALVVTGNGRGLAGYAVGKAPIHRTTTAIINGIGMASRKIFHVELHEGRTIYQDFYAECRNTRVFAQRRPRGFGLTCHPRLIKICEAIGIKDIYVKVEGSTKNYLALTHAFVTGLLNQETHQQLAERKGLHVVEMSPSRHFLPQIVASPISTELKTEETLEALDRLNLDDFYGEGRYPLRKPKALPFFSNLEGHLDARWRKHPFRNQESTMIRLIADNMVPRWTRDARAAWAEQRNERMTTGVEPMPLGIGLSHVVPKKDD</sequence>
<comment type="subunit">
    <text evidence="1">Component of the mitochondrial ribosome small subunit (28S) which comprises a 12S rRNA and about 30 distinct proteins.</text>
</comment>
<comment type="subcellular location">
    <subcellularLocation>
        <location evidence="1">Mitochondrion</location>
    </subcellularLocation>
</comment>
<comment type="similarity">
    <text evidence="2">Belongs to the universal ribosomal protein uS5 family.</text>
</comment>
<accession>A8Y3Q1</accession>
<gene>
    <name type="primary">mrps-5</name>
    <name type="ORF">CBG23528</name>
</gene>
<dbReference type="EMBL" id="HE601533">
    <property type="protein sequence ID" value="CAP39520.3"/>
    <property type="molecule type" value="Genomic_DNA"/>
</dbReference>
<dbReference type="SMR" id="A8Y3Q1"/>
<dbReference type="FunCoup" id="A8Y3Q1">
    <property type="interactions" value="1413"/>
</dbReference>
<dbReference type="STRING" id="6238.A8Y3Q1"/>
<dbReference type="WormBase" id="CBG23528">
    <property type="protein sequence ID" value="CBP20636"/>
    <property type="gene ID" value="WBGene00041867"/>
    <property type="gene designation" value="Cbr-mrps-5"/>
</dbReference>
<dbReference type="eggNOG" id="KOG2646">
    <property type="taxonomic scope" value="Eukaryota"/>
</dbReference>
<dbReference type="HOGENOM" id="CLU_050434_1_0_1"/>
<dbReference type="InParanoid" id="A8Y3Q1"/>
<dbReference type="OMA" id="LICHRAI"/>
<dbReference type="Proteomes" id="UP000008549">
    <property type="component" value="Unassembled WGS sequence"/>
</dbReference>
<dbReference type="GO" id="GO:0005763">
    <property type="term" value="C:mitochondrial small ribosomal subunit"/>
    <property type="evidence" value="ECO:0000250"/>
    <property type="project" value="UniProtKB"/>
</dbReference>
<dbReference type="GO" id="GO:0003723">
    <property type="term" value="F:RNA binding"/>
    <property type="evidence" value="ECO:0007669"/>
    <property type="project" value="InterPro"/>
</dbReference>
<dbReference type="GO" id="GO:0003735">
    <property type="term" value="F:structural constituent of ribosome"/>
    <property type="evidence" value="ECO:0000318"/>
    <property type="project" value="GO_Central"/>
</dbReference>
<dbReference type="GO" id="GO:0006412">
    <property type="term" value="P:translation"/>
    <property type="evidence" value="ECO:0000318"/>
    <property type="project" value="GO_Central"/>
</dbReference>
<dbReference type="FunFam" id="3.30.160.20:FF:000022">
    <property type="entry name" value="28S ribosomal protein S5, mitochondrial"/>
    <property type="match status" value="1"/>
</dbReference>
<dbReference type="FunFam" id="3.30.230.10:FF:000002">
    <property type="entry name" value="30S ribosomal protein S5"/>
    <property type="match status" value="1"/>
</dbReference>
<dbReference type="Gene3D" id="3.30.160.20">
    <property type="match status" value="1"/>
</dbReference>
<dbReference type="Gene3D" id="3.30.230.10">
    <property type="match status" value="1"/>
</dbReference>
<dbReference type="InterPro" id="IPR020568">
    <property type="entry name" value="Ribosomal_Su5_D2-typ_SF"/>
</dbReference>
<dbReference type="InterPro" id="IPR000851">
    <property type="entry name" value="Ribosomal_uS5"/>
</dbReference>
<dbReference type="InterPro" id="IPR005324">
    <property type="entry name" value="Ribosomal_uS5_C"/>
</dbReference>
<dbReference type="InterPro" id="IPR013810">
    <property type="entry name" value="Ribosomal_uS5_N"/>
</dbReference>
<dbReference type="InterPro" id="IPR018192">
    <property type="entry name" value="Ribosomal_uS5_N_CS"/>
</dbReference>
<dbReference type="InterPro" id="IPR048584">
    <property type="entry name" value="Ribosomal_uS5m_N"/>
</dbReference>
<dbReference type="InterPro" id="IPR014721">
    <property type="entry name" value="Ribsml_uS5_D2-typ_fold_subgr"/>
</dbReference>
<dbReference type="PANTHER" id="PTHR48277">
    <property type="entry name" value="MITOCHONDRIAL RIBOSOMAL PROTEIN S5"/>
    <property type="match status" value="1"/>
</dbReference>
<dbReference type="PANTHER" id="PTHR48277:SF1">
    <property type="entry name" value="MITOCHONDRIAL RIBOSOMAL PROTEIN S5"/>
    <property type="match status" value="1"/>
</dbReference>
<dbReference type="Pfam" id="PF00333">
    <property type="entry name" value="Ribosomal_S5"/>
    <property type="match status" value="1"/>
</dbReference>
<dbReference type="Pfam" id="PF03719">
    <property type="entry name" value="Ribosomal_S5_C"/>
    <property type="match status" value="1"/>
</dbReference>
<dbReference type="Pfam" id="PF21251">
    <property type="entry name" value="Ribosomal_uS5m_N"/>
    <property type="match status" value="1"/>
</dbReference>
<dbReference type="SUPFAM" id="SSF54768">
    <property type="entry name" value="dsRNA-binding domain-like"/>
    <property type="match status" value="1"/>
</dbReference>
<dbReference type="SUPFAM" id="SSF54211">
    <property type="entry name" value="Ribosomal protein S5 domain 2-like"/>
    <property type="match status" value="1"/>
</dbReference>
<dbReference type="PROSITE" id="PS00585">
    <property type="entry name" value="RIBOSOMAL_S5"/>
    <property type="match status" value="1"/>
</dbReference>
<dbReference type="PROSITE" id="PS50881">
    <property type="entry name" value="S5_DSRBD"/>
    <property type="match status" value="1"/>
</dbReference>
<keyword id="KW-0496">Mitochondrion</keyword>
<keyword id="KW-1185">Reference proteome</keyword>
<keyword id="KW-0687">Ribonucleoprotein</keyword>
<keyword id="KW-0689">Ribosomal protein</keyword>
<protein>
    <recommendedName>
        <fullName evidence="5">Small ribosomal subunit protein uS5m</fullName>
    </recommendedName>
    <alternativeName>
        <fullName evidence="5">28S ribosomal protein S5, mitochondrial</fullName>
    </alternativeName>
</protein>
<organism>
    <name type="scientific">Caenorhabditis briggsae</name>
    <dbReference type="NCBI Taxonomy" id="6238"/>
    <lineage>
        <taxon>Eukaryota</taxon>
        <taxon>Metazoa</taxon>
        <taxon>Ecdysozoa</taxon>
        <taxon>Nematoda</taxon>
        <taxon>Chromadorea</taxon>
        <taxon>Rhabditida</taxon>
        <taxon>Rhabditina</taxon>
        <taxon>Rhabditomorpha</taxon>
        <taxon>Rhabditoidea</taxon>
        <taxon>Rhabditidae</taxon>
        <taxon>Peloderinae</taxon>
        <taxon>Caenorhabditis</taxon>
    </lineage>
</organism>
<name>RT05_CAEBR</name>